<accession>A9KN62</accession>
<protein>
    <recommendedName>
        <fullName>Phosphate propanoyltransferase</fullName>
        <ecNumber>2.3.1.222</ecNumber>
    </recommendedName>
    <alternativeName>
        <fullName>Phosphate acyltransferase PduL</fullName>
    </alternativeName>
    <alternativeName>
        <fullName>Phosphotransacylase PduL</fullName>
        <shortName>PTAC</shortName>
    </alternativeName>
    <alternativeName>
        <fullName>Propanediol utilization protein PduL</fullName>
    </alternativeName>
</protein>
<feature type="chain" id="PRO_0000407715" description="Phosphate propanoyltransferase">
    <location>
        <begin position="1"/>
        <end position="213"/>
    </location>
</feature>
<feature type="binding site" evidence="1">
    <location>
        <begin position="33"/>
        <end position="35"/>
    </location>
    <ligand>
        <name>CoA</name>
        <dbReference type="ChEBI" id="CHEBI:57287"/>
    </ligand>
</feature>
<feature type="binding site" evidence="1">
    <location>
        <position position="37"/>
    </location>
    <ligand>
        <name>Zn(2+)</name>
        <dbReference type="ChEBI" id="CHEBI:29105"/>
        <label>1</label>
    </ligand>
</feature>
<feature type="binding site" evidence="1">
    <location>
        <position position="39"/>
    </location>
    <ligand>
        <name>Zn(2+)</name>
        <dbReference type="ChEBI" id="CHEBI:29105"/>
        <label>1</label>
    </ligand>
</feature>
<feature type="binding site" evidence="1">
    <location>
        <position position="78"/>
    </location>
    <ligand>
        <name>CoA</name>
        <dbReference type="ChEBI" id="CHEBI:57287"/>
    </ligand>
</feature>
<feature type="binding site" evidence="1">
    <location>
        <position position="86"/>
    </location>
    <ligand>
        <name>CoA</name>
        <dbReference type="ChEBI" id="CHEBI:57287"/>
    </ligand>
</feature>
<feature type="binding site" evidence="1">
    <location>
        <position position="92"/>
    </location>
    <ligand>
        <name>phosphate</name>
        <dbReference type="ChEBI" id="CHEBI:43474"/>
    </ligand>
</feature>
<feature type="binding site" evidence="1">
    <location>
        <position position="98"/>
    </location>
    <ligand>
        <name>Zn(2+)</name>
        <dbReference type="ChEBI" id="CHEBI:29105"/>
        <label>1</label>
    </ligand>
</feature>
<feature type="binding site" evidence="1">
    <location>
        <position position="146"/>
    </location>
    <ligand>
        <name>Zn(2+)</name>
        <dbReference type="ChEBI" id="CHEBI:29105"/>
        <label>2</label>
    </ligand>
</feature>
<feature type="binding site" evidence="1">
    <location>
        <position position="148"/>
    </location>
    <ligand>
        <name>Zn(2+)</name>
        <dbReference type="ChEBI" id="CHEBI:29105"/>
        <label>2</label>
    </ligand>
</feature>
<feature type="binding site" evidence="1">
    <location>
        <position position="193"/>
    </location>
    <ligand>
        <name>Zn(2+)</name>
        <dbReference type="ChEBI" id="CHEBI:29105"/>
        <label>2</label>
    </ligand>
</feature>
<feature type="binding site" evidence="1">
    <location>
        <position position="200"/>
    </location>
    <ligand>
        <name>CoA</name>
        <dbReference type="ChEBI" id="CHEBI:57287"/>
    </ligand>
</feature>
<sequence length="213" mass="23061">MEDNQIELITRMVLNVLQEKQSGKTGFAVPVGVSARHLHLTQDHVEQLFGKGYELTKKKDLMGGQFAANETVTIVGLKLRAIENVRILGPVRKASQVEVSATDAIKLGVKIPIRESGNIKGSAPIAVVGPKGAIYLDEGCIIAKRHIHMSPTDASTAGVKDGDIVSVKVDDERETVFHQVQIRVDSSFTLEMHIDTDEANAAKITCGQIVTIL</sequence>
<organism>
    <name type="scientific">Lachnoclostridium phytofermentans (strain ATCC 700394 / DSM 18823 / ISDg)</name>
    <name type="common">Clostridium phytofermentans</name>
    <dbReference type="NCBI Taxonomy" id="357809"/>
    <lineage>
        <taxon>Bacteria</taxon>
        <taxon>Bacillati</taxon>
        <taxon>Bacillota</taxon>
        <taxon>Clostridia</taxon>
        <taxon>Lachnospirales</taxon>
        <taxon>Lachnospiraceae</taxon>
    </lineage>
</organism>
<proteinExistence type="inferred from homology"/>
<reference key="1">
    <citation type="submission" date="2007-11" db="EMBL/GenBank/DDBJ databases">
        <title>Complete genome sequence of Clostridium phytofermentans ISDg.</title>
        <authorList>
            <person name="Leschine S.B."/>
            <person name="Warnick T.A."/>
            <person name="Blanchard J.L."/>
            <person name="Schnell D.J."/>
            <person name="Petit E.L."/>
            <person name="LaTouf W.G."/>
            <person name="Copeland A."/>
            <person name="Lucas S."/>
            <person name="Lapidus A."/>
            <person name="Barry K."/>
            <person name="Glavina del Rio T."/>
            <person name="Dalin E."/>
            <person name="Tice H."/>
            <person name="Pitluck S."/>
            <person name="Kiss H."/>
            <person name="Brettin T."/>
            <person name="Bruce D."/>
            <person name="Detter J.C."/>
            <person name="Han C."/>
            <person name="Kuske C."/>
            <person name="Schmutz J."/>
            <person name="Larimer F."/>
            <person name="Land M."/>
            <person name="Hauser L."/>
            <person name="Kyrpides N."/>
            <person name="Kim E.A."/>
            <person name="Richardson P."/>
        </authorList>
    </citation>
    <scope>NUCLEOTIDE SEQUENCE [LARGE SCALE GENOMIC DNA]</scope>
    <source>
        <strain>ATCC 700394 / DSM 18823 / ISDg</strain>
    </source>
</reference>
<comment type="function">
    <text evidence="2">Involved in 1,2-propanediol (1,2-PD) utilization within the bacterial microcompartment (BMC) dedicated to 1,2-PD degradation by catalyzing the conversion of propanoyl-CoA to propanoyl-phosphate.</text>
</comment>
<comment type="catalytic activity">
    <reaction evidence="2">
        <text>propanoyl-CoA + phosphate = propanoyl phosphate + CoA</text>
        <dbReference type="Rhea" id="RHEA:28046"/>
        <dbReference type="ChEBI" id="CHEBI:43474"/>
        <dbReference type="ChEBI" id="CHEBI:57287"/>
        <dbReference type="ChEBI" id="CHEBI:57392"/>
        <dbReference type="ChEBI" id="CHEBI:58933"/>
        <dbReference type="EC" id="2.3.1.222"/>
    </reaction>
</comment>
<comment type="cofactor">
    <cofactor evidence="1">
        <name>Zn(2+)</name>
        <dbReference type="ChEBI" id="CHEBI:29105"/>
    </cofactor>
    <text evidence="1">There are 2 Zn(2+) ions per monomer; Zn(2+) and CoA bind inbetween the 2 domains in each monomer.</text>
</comment>
<comment type="pathway">
    <text>Polyol metabolism; 1,2-propanediol degradation.</text>
</comment>
<comment type="subcellular location">
    <subcellularLocation>
        <location evidence="2">Bacterial microcompartment</location>
    </subcellularLocation>
</comment>
<comment type="domain">
    <text evidence="1">Formed by 2 beta-barrels, each is capped on both ends by short alpha-helices.</text>
</comment>
<comment type="similarity">
    <text evidence="3">Belongs to the PduL family.</text>
</comment>
<evidence type="ECO:0000250" key="1">
    <source>
        <dbReference type="UniProtKB" id="Q21A54"/>
    </source>
</evidence>
<evidence type="ECO:0000250" key="2">
    <source>
        <dbReference type="UniProtKB" id="Q9XDN5"/>
    </source>
</evidence>
<evidence type="ECO:0000305" key="3"/>
<name>PDUL_LACP7</name>
<dbReference type="EC" id="2.3.1.222"/>
<dbReference type="EMBL" id="CP000885">
    <property type="protein sequence ID" value="ABX41561.1"/>
    <property type="molecule type" value="Genomic_DNA"/>
</dbReference>
<dbReference type="RefSeq" id="WP_012199209.1">
    <property type="nucleotide sequence ID" value="NC_010001.1"/>
</dbReference>
<dbReference type="SMR" id="A9KN62"/>
<dbReference type="STRING" id="357809.Cphy_1183"/>
<dbReference type="KEGG" id="cpy:Cphy_1183"/>
<dbReference type="eggNOG" id="COG4869">
    <property type="taxonomic scope" value="Bacteria"/>
</dbReference>
<dbReference type="HOGENOM" id="CLU_080676_1_0_9"/>
<dbReference type="OrthoDB" id="9784365at2"/>
<dbReference type="UniPathway" id="UPA00621"/>
<dbReference type="Proteomes" id="UP000000370">
    <property type="component" value="Chromosome"/>
</dbReference>
<dbReference type="GO" id="GO:0031469">
    <property type="term" value="C:bacterial microcompartment"/>
    <property type="evidence" value="ECO:0007669"/>
    <property type="project" value="UniProtKB-SubCell"/>
</dbReference>
<dbReference type="GO" id="GO:0016747">
    <property type="term" value="F:acyltransferase activity, transferring groups other than amino-acyl groups"/>
    <property type="evidence" value="ECO:0007669"/>
    <property type="project" value="InterPro"/>
</dbReference>
<dbReference type="GO" id="GO:0046872">
    <property type="term" value="F:metal ion binding"/>
    <property type="evidence" value="ECO:0007669"/>
    <property type="project" value="UniProtKB-KW"/>
</dbReference>
<dbReference type="GO" id="GO:0051144">
    <property type="term" value="P:propanediol catabolic process"/>
    <property type="evidence" value="ECO:0007669"/>
    <property type="project" value="UniProtKB-UniPathway"/>
</dbReference>
<dbReference type="InterPro" id="IPR008300">
    <property type="entry name" value="PTAC"/>
</dbReference>
<dbReference type="NCBIfam" id="NF011652">
    <property type="entry name" value="PRK15070.1"/>
    <property type="match status" value="1"/>
</dbReference>
<dbReference type="PANTHER" id="PTHR39453">
    <property type="entry name" value="PHOSPHATE PROPANOYLTRANSFERASE"/>
    <property type="match status" value="1"/>
</dbReference>
<dbReference type="PANTHER" id="PTHR39453:SF1">
    <property type="entry name" value="PHOSPHATE PROPANOYLTRANSFERASE"/>
    <property type="match status" value="1"/>
</dbReference>
<dbReference type="Pfam" id="PF06130">
    <property type="entry name" value="PTAC"/>
    <property type="match status" value="1"/>
</dbReference>
<dbReference type="PIRSF" id="PIRSF010130">
    <property type="entry name" value="PduL"/>
    <property type="match status" value="1"/>
</dbReference>
<keyword id="KW-0012">Acyltransferase</keyword>
<keyword id="KW-1283">Bacterial microcompartment</keyword>
<keyword id="KW-0479">Metal-binding</keyword>
<keyword id="KW-1185">Reference proteome</keyword>
<keyword id="KW-0808">Transferase</keyword>
<keyword id="KW-0862">Zinc</keyword>
<gene>
    <name type="primary">pduL</name>
    <name type="ordered locus">Cphy_1183</name>
</gene>